<evidence type="ECO:0000255" key="1">
    <source>
        <dbReference type="HAMAP-Rule" id="MF_00087"/>
    </source>
</evidence>
<comment type="function">
    <text evidence="1">Catalyzes the NADPH-dependent reduction of glutamyl-tRNA(Glu) to glutamate 1-semialdehyde (GSA).</text>
</comment>
<comment type="catalytic activity">
    <reaction evidence="1">
        <text>(S)-4-amino-5-oxopentanoate + tRNA(Glu) + NADP(+) = L-glutamyl-tRNA(Glu) + NADPH + H(+)</text>
        <dbReference type="Rhea" id="RHEA:12344"/>
        <dbReference type="Rhea" id="RHEA-COMP:9663"/>
        <dbReference type="Rhea" id="RHEA-COMP:9680"/>
        <dbReference type="ChEBI" id="CHEBI:15378"/>
        <dbReference type="ChEBI" id="CHEBI:57501"/>
        <dbReference type="ChEBI" id="CHEBI:57783"/>
        <dbReference type="ChEBI" id="CHEBI:58349"/>
        <dbReference type="ChEBI" id="CHEBI:78442"/>
        <dbReference type="ChEBI" id="CHEBI:78520"/>
        <dbReference type="EC" id="1.2.1.70"/>
    </reaction>
</comment>
<comment type="pathway">
    <text evidence="1">Porphyrin-containing compound metabolism; protoporphyrin-IX biosynthesis; 5-aminolevulinate from L-glutamyl-tRNA(Glu): step 1/2.</text>
</comment>
<comment type="pathway">
    <text evidence="1">Porphyrin-containing compound metabolism; chlorophyll biosynthesis.</text>
</comment>
<comment type="subunit">
    <text evidence="1">Homodimer.</text>
</comment>
<comment type="domain">
    <text evidence="1">Possesses an unusual extended V-shaped dimeric structure with each monomer consisting of three distinct domains arranged along a curved 'spinal' alpha-helix. The N-terminal catalytic domain specifically recognizes the glutamate moiety of the substrate. The second domain is the NADPH-binding domain, and the third C-terminal domain is responsible for dimerization.</text>
</comment>
<comment type="miscellaneous">
    <text evidence="1">During catalysis, the active site Cys acts as a nucleophile attacking the alpha-carbonyl group of tRNA-bound glutamate with the formation of a thioester intermediate between enzyme and glutamate, and the concomitant release of tRNA(Glu). The thioester intermediate is finally reduced by direct hydride transfer from NADPH, to form the product GSA.</text>
</comment>
<comment type="similarity">
    <text evidence="1">Belongs to the glutamyl-tRNA reductase family.</text>
</comment>
<accession>B4SFI3</accession>
<feature type="chain" id="PRO_1000093156" description="Glutamyl-tRNA reductase">
    <location>
        <begin position="1"/>
        <end position="425"/>
    </location>
</feature>
<feature type="active site" description="Nucleophile" evidence="1">
    <location>
        <position position="50"/>
    </location>
</feature>
<feature type="binding site" evidence="1">
    <location>
        <begin position="49"/>
        <end position="52"/>
    </location>
    <ligand>
        <name>substrate</name>
    </ligand>
</feature>
<feature type="binding site" evidence="1">
    <location>
        <position position="109"/>
    </location>
    <ligand>
        <name>substrate</name>
    </ligand>
</feature>
<feature type="binding site" evidence="1">
    <location>
        <begin position="114"/>
        <end position="116"/>
    </location>
    <ligand>
        <name>substrate</name>
    </ligand>
</feature>
<feature type="binding site" evidence="1">
    <location>
        <position position="120"/>
    </location>
    <ligand>
        <name>substrate</name>
    </ligand>
</feature>
<feature type="binding site" evidence="1">
    <location>
        <begin position="189"/>
        <end position="194"/>
    </location>
    <ligand>
        <name>NADP(+)</name>
        <dbReference type="ChEBI" id="CHEBI:58349"/>
    </ligand>
</feature>
<feature type="site" description="Important for activity" evidence="1">
    <location>
        <position position="99"/>
    </location>
</feature>
<sequence length="425" mass="48410">MNIISVGVNHKTAPIEIRERISLSEVQNKEFITGLISSGLAHEAMVVSTCNRTELYVVPAIYEVNGEFLKEYLISFKDARKEVRPEHFFSRFYCGTARHIFEVASAIDSLVLGEGQILGQVKNAYRIAAETQCAGILITRLCHTAFSVAKKVKTKTKIMEGAVSVSYAAVELAQKIFSNLSMKKVLLVGAGETGELAAKHMFQKNARNIVITNRTLSKAETLAEELGTNKVLPFETFREHLHEFDIIITAISTKEYVLNEAEMHQSMIKRRLKPVIILDLGLPRNVDPDVSKLQNMFLKDIDALKHIIDKNLEKRSRELPKVNAIIEEELIAFGQWINTLKVRPTIVDLQSKFIEIKEKELERYRYKVSEEELQRMEHLTDRILKKILHHPIKMLKAPIDTTDSIPSRVNLVRNVFDLEEPNQSH</sequence>
<keyword id="KW-0149">Chlorophyll biosynthesis</keyword>
<keyword id="KW-0521">NADP</keyword>
<keyword id="KW-0560">Oxidoreductase</keyword>
<keyword id="KW-0627">Porphyrin biosynthesis</keyword>
<keyword id="KW-1185">Reference proteome</keyword>
<proteinExistence type="inferred from homology"/>
<gene>
    <name evidence="1" type="primary">hemA</name>
    <name type="ordered locus">Ppha_0951</name>
</gene>
<name>HEM1_PELPB</name>
<organism>
    <name type="scientific">Pelodictyon phaeoclathratiforme (strain DSM 5477 / BU-1)</name>
    <dbReference type="NCBI Taxonomy" id="324925"/>
    <lineage>
        <taxon>Bacteria</taxon>
        <taxon>Pseudomonadati</taxon>
        <taxon>Chlorobiota</taxon>
        <taxon>Chlorobiia</taxon>
        <taxon>Chlorobiales</taxon>
        <taxon>Chlorobiaceae</taxon>
        <taxon>Chlorobium/Pelodictyon group</taxon>
        <taxon>Pelodictyon</taxon>
    </lineage>
</organism>
<protein>
    <recommendedName>
        <fullName evidence="1">Glutamyl-tRNA reductase</fullName>
        <shortName evidence="1">GluTR</shortName>
        <ecNumber evidence="1">1.2.1.70</ecNumber>
    </recommendedName>
</protein>
<reference key="1">
    <citation type="submission" date="2008-06" db="EMBL/GenBank/DDBJ databases">
        <title>Complete sequence of Pelodictyon phaeoclathratiforme BU-1.</title>
        <authorList>
            <consortium name="US DOE Joint Genome Institute"/>
            <person name="Lucas S."/>
            <person name="Copeland A."/>
            <person name="Lapidus A."/>
            <person name="Glavina del Rio T."/>
            <person name="Dalin E."/>
            <person name="Tice H."/>
            <person name="Bruce D."/>
            <person name="Goodwin L."/>
            <person name="Pitluck S."/>
            <person name="Schmutz J."/>
            <person name="Larimer F."/>
            <person name="Land M."/>
            <person name="Hauser L."/>
            <person name="Kyrpides N."/>
            <person name="Mikhailova N."/>
            <person name="Liu Z."/>
            <person name="Li T."/>
            <person name="Zhao F."/>
            <person name="Overmann J."/>
            <person name="Bryant D.A."/>
            <person name="Richardson P."/>
        </authorList>
    </citation>
    <scope>NUCLEOTIDE SEQUENCE [LARGE SCALE GENOMIC DNA]</scope>
    <source>
        <strain>DSM 5477 / BU-1</strain>
    </source>
</reference>
<dbReference type="EC" id="1.2.1.70" evidence="1"/>
<dbReference type="EMBL" id="CP001110">
    <property type="protein sequence ID" value="ACF43238.1"/>
    <property type="molecule type" value="Genomic_DNA"/>
</dbReference>
<dbReference type="RefSeq" id="WP_012507733.1">
    <property type="nucleotide sequence ID" value="NC_011060.1"/>
</dbReference>
<dbReference type="SMR" id="B4SFI3"/>
<dbReference type="STRING" id="324925.Ppha_0951"/>
<dbReference type="KEGG" id="pph:Ppha_0951"/>
<dbReference type="eggNOG" id="COG0373">
    <property type="taxonomic scope" value="Bacteria"/>
</dbReference>
<dbReference type="HOGENOM" id="CLU_035113_2_2_10"/>
<dbReference type="OrthoDB" id="110209at2"/>
<dbReference type="UniPathway" id="UPA00251">
    <property type="reaction ID" value="UER00316"/>
</dbReference>
<dbReference type="UniPathway" id="UPA00668"/>
<dbReference type="Proteomes" id="UP000002724">
    <property type="component" value="Chromosome"/>
</dbReference>
<dbReference type="GO" id="GO:0008883">
    <property type="term" value="F:glutamyl-tRNA reductase activity"/>
    <property type="evidence" value="ECO:0007669"/>
    <property type="project" value="UniProtKB-UniRule"/>
</dbReference>
<dbReference type="GO" id="GO:0050661">
    <property type="term" value="F:NADP binding"/>
    <property type="evidence" value="ECO:0007669"/>
    <property type="project" value="InterPro"/>
</dbReference>
<dbReference type="GO" id="GO:0015995">
    <property type="term" value="P:chlorophyll biosynthetic process"/>
    <property type="evidence" value="ECO:0007669"/>
    <property type="project" value="UniProtKB-UniRule"/>
</dbReference>
<dbReference type="GO" id="GO:0019353">
    <property type="term" value="P:protoporphyrinogen IX biosynthetic process from glutamate"/>
    <property type="evidence" value="ECO:0007669"/>
    <property type="project" value="TreeGrafter"/>
</dbReference>
<dbReference type="CDD" id="cd05213">
    <property type="entry name" value="NAD_bind_Glutamyl_tRNA_reduct"/>
    <property type="match status" value="1"/>
</dbReference>
<dbReference type="FunFam" id="3.30.460.30:FF:000001">
    <property type="entry name" value="Glutamyl-tRNA reductase"/>
    <property type="match status" value="1"/>
</dbReference>
<dbReference type="FunFam" id="3.40.50.720:FF:000031">
    <property type="entry name" value="Glutamyl-tRNA reductase"/>
    <property type="match status" value="1"/>
</dbReference>
<dbReference type="Gene3D" id="3.30.460.30">
    <property type="entry name" value="Glutamyl-tRNA reductase, N-terminal domain"/>
    <property type="match status" value="1"/>
</dbReference>
<dbReference type="Gene3D" id="3.40.50.720">
    <property type="entry name" value="NAD(P)-binding Rossmann-like Domain"/>
    <property type="match status" value="1"/>
</dbReference>
<dbReference type="HAMAP" id="MF_00087">
    <property type="entry name" value="Glu_tRNA_reductase"/>
    <property type="match status" value="1"/>
</dbReference>
<dbReference type="InterPro" id="IPR000343">
    <property type="entry name" value="4pyrrol_synth_GluRdtase"/>
</dbReference>
<dbReference type="InterPro" id="IPR015896">
    <property type="entry name" value="4pyrrol_synth_GluRdtase_dimer"/>
</dbReference>
<dbReference type="InterPro" id="IPR015895">
    <property type="entry name" value="4pyrrol_synth_GluRdtase_N"/>
</dbReference>
<dbReference type="InterPro" id="IPR018214">
    <property type="entry name" value="GluRdtase_CS"/>
</dbReference>
<dbReference type="InterPro" id="IPR036453">
    <property type="entry name" value="GluRdtase_dimer_dom_sf"/>
</dbReference>
<dbReference type="InterPro" id="IPR036343">
    <property type="entry name" value="GluRdtase_N_sf"/>
</dbReference>
<dbReference type="InterPro" id="IPR036291">
    <property type="entry name" value="NAD(P)-bd_dom_sf"/>
</dbReference>
<dbReference type="InterPro" id="IPR006151">
    <property type="entry name" value="Shikm_DH/Glu-tRNA_Rdtase"/>
</dbReference>
<dbReference type="NCBIfam" id="TIGR01035">
    <property type="entry name" value="hemA"/>
    <property type="match status" value="1"/>
</dbReference>
<dbReference type="PANTHER" id="PTHR43013">
    <property type="entry name" value="GLUTAMYL-TRNA REDUCTASE"/>
    <property type="match status" value="1"/>
</dbReference>
<dbReference type="PANTHER" id="PTHR43013:SF1">
    <property type="entry name" value="GLUTAMYL-TRNA REDUCTASE"/>
    <property type="match status" value="1"/>
</dbReference>
<dbReference type="Pfam" id="PF00745">
    <property type="entry name" value="GlutR_dimer"/>
    <property type="match status" value="1"/>
</dbReference>
<dbReference type="Pfam" id="PF05201">
    <property type="entry name" value="GlutR_N"/>
    <property type="match status" value="1"/>
</dbReference>
<dbReference type="Pfam" id="PF01488">
    <property type="entry name" value="Shikimate_DH"/>
    <property type="match status" value="1"/>
</dbReference>
<dbReference type="PIRSF" id="PIRSF000445">
    <property type="entry name" value="4pyrrol_synth_GluRdtase"/>
    <property type="match status" value="1"/>
</dbReference>
<dbReference type="SUPFAM" id="SSF69742">
    <property type="entry name" value="Glutamyl tRNA-reductase catalytic, N-terminal domain"/>
    <property type="match status" value="1"/>
</dbReference>
<dbReference type="SUPFAM" id="SSF69075">
    <property type="entry name" value="Glutamyl tRNA-reductase dimerization domain"/>
    <property type="match status" value="1"/>
</dbReference>
<dbReference type="SUPFAM" id="SSF51735">
    <property type="entry name" value="NAD(P)-binding Rossmann-fold domains"/>
    <property type="match status" value="1"/>
</dbReference>
<dbReference type="PROSITE" id="PS00747">
    <property type="entry name" value="GLUTR"/>
    <property type="match status" value="1"/>
</dbReference>